<dbReference type="EC" id="7.1.2.2" evidence="1"/>
<dbReference type="EMBL" id="CP000912">
    <property type="protein sequence ID" value="ABY40210.1"/>
    <property type="molecule type" value="Genomic_DNA"/>
</dbReference>
<dbReference type="RefSeq" id="WP_002967929.1">
    <property type="nucleotide sequence ID" value="NC_010167.1"/>
</dbReference>
<dbReference type="SMR" id="A9WWS4"/>
<dbReference type="GeneID" id="55591399"/>
<dbReference type="KEGG" id="bmt:BSUIS_B1277"/>
<dbReference type="HOGENOM" id="CLU_010091_2_1_5"/>
<dbReference type="Proteomes" id="UP000008545">
    <property type="component" value="Chromosome II"/>
</dbReference>
<dbReference type="GO" id="GO:0005886">
    <property type="term" value="C:plasma membrane"/>
    <property type="evidence" value="ECO:0007669"/>
    <property type="project" value="UniProtKB-SubCell"/>
</dbReference>
<dbReference type="GO" id="GO:0045259">
    <property type="term" value="C:proton-transporting ATP synthase complex"/>
    <property type="evidence" value="ECO:0007669"/>
    <property type="project" value="UniProtKB-KW"/>
</dbReference>
<dbReference type="GO" id="GO:0043531">
    <property type="term" value="F:ADP binding"/>
    <property type="evidence" value="ECO:0007669"/>
    <property type="project" value="TreeGrafter"/>
</dbReference>
<dbReference type="GO" id="GO:0005524">
    <property type="term" value="F:ATP binding"/>
    <property type="evidence" value="ECO:0007669"/>
    <property type="project" value="UniProtKB-UniRule"/>
</dbReference>
<dbReference type="GO" id="GO:0046933">
    <property type="term" value="F:proton-transporting ATP synthase activity, rotational mechanism"/>
    <property type="evidence" value="ECO:0007669"/>
    <property type="project" value="UniProtKB-UniRule"/>
</dbReference>
<dbReference type="CDD" id="cd18113">
    <property type="entry name" value="ATP-synt_F1_alpha_C"/>
    <property type="match status" value="1"/>
</dbReference>
<dbReference type="CDD" id="cd18116">
    <property type="entry name" value="ATP-synt_F1_alpha_N"/>
    <property type="match status" value="1"/>
</dbReference>
<dbReference type="CDD" id="cd01132">
    <property type="entry name" value="F1-ATPase_alpha_CD"/>
    <property type="match status" value="1"/>
</dbReference>
<dbReference type="FunFam" id="1.20.150.20:FF:000001">
    <property type="entry name" value="ATP synthase subunit alpha"/>
    <property type="match status" value="1"/>
</dbReference>
<dbReference type="FunFam" id="2.40.30.20:FF:000001">
    <property type="entry name" value="ATP synthase subunit alpha"/>
    <property type="match status" value="1"/>
</dbReference>
<dbReference type="FunFam" id="3.40.50.300:FF:002432">
    <property type="entry name" value="ATP synthase subunit alpha, mitochondrial"/>
    <property type="match status" value="1"/>
</dbReference>
<dbReference type="Gene3D" id="2.40.30.20">
    <property type="match status" value="1"/>
</dbReference>
<dbReference type="Gene3D" id="1.20.150.20">
    <property type="entry name" value="ATP synthase alpha/beta chain, C-terminal domain"/>
    <property type="match status" value="1"/>
</dbReference>
<dbReference type="Gene3D" id="3.40.50.300">
    <property type="entry name" value="P-loop containing nucleotide triphosphate hydrolases"/>
    <property type="match status" value="1"/>
</dbReference>
<dbReference type="HAMAP" id="MF_01346">
    <property type="entry name" value="ATP_synth_alpha_bact"/>
    <property type="match status" value="1"/>
</dbReference>
<dbReference type="InterPro" id="IPR023366">
    <property type="entry name" value="ATP_synth_asu-like_sf"/>
</dbReference>
<dbReference type="InterPro" id="IPR000793">
    <property type="entry name" value="ATP_synth_asu_C"/>
</dbReference>
<dbReference type="InterPro" id="IPR038376">
    <property type="entry name" value="ATP_synth_asu_C_sf"/>
</dbReference>
<dbReference type="InterPro" id="IPR033732">
    <property type="entry name" value="ATP_synth_F1_a_nt-bd_dom"/>
</dbReference>
<dbReference type="InterPro" id="IPR005294">
    <property type="entry name" value="ATP_synth_F1_asu"/>
</dbReference>
<dbReference type="InterPro" id="IPR020003">
    <property type="entry name" value="ATPase_a/bsu_AS"/>
</dbReference>
<dbReference type="InterPro" id="IPR004100">
    <property type="entry name" value="ATPase_F1/V1/A1_a/bsu_N"/>
</dbReference>
<dbReference type="InterPro" id="IPR036121">
    <property type="entry name" value="ATPase_F1/V1/A1_a/bsu_N_sf"/>
</dbReference>
<dbReference type="InterPro" id="IPR000194">
    <property type="entry name" value="ATPase_F1/V1/A1_a/bsu_nucl-bd"/>
</dbReference>
<dbReference type="InterPro" id="IPR027417">
    <property type="entry name" value="P-loop_NTPase"/>
</dbReference>
<dbReference type="NCBIfam" id="TIGR00962">
    <property type="entry name" value="atpA"/>
    <property type="match status" value="1"/>
</dbReference>
<dbReference type="NCBIfam" id="NF009884">
    <property type="entry name" value="PRK13343.1"/>
    <property type="match status" value="1"/>
</dbReference>
<dbReference type="PANTHER" id="PTHR48082">
    <property type="entry name" value="ATP SYNTHASE SUBUNIT ALPHA, MITOCHONDRIAL"/>
    <property type="match status" value="1"/>
</dbReference>
<dbReference type="PANTHER" id="PTHR48082:SF2">
    <property type="entry name" value="ATP SYNTHASE SUBUNIT ALPHA, MITOCHONDRIAL"/>
    <property type="match status" value="1"/>
</dbReference>
<dbReference type="Pfam" id="PF00006">
    <property type="entry name" value="ATP-synt_ab"/>
    <property type="match status" value="1"/>
</dbReference>
<dbReference type="Pfam" id="PF00306">
    <property type="entry name" value="ATP-synt_ab_C"/>
    <property type="match status" value="1"/>
</dbReference>
<dbReference type="Pfam" id="PF02874">
    <property type="entry name" value="ATP-synt_ab_N"/>
    <property type="match status" value="1"/>
</dbReference>
<dbReference type="PIRSF" id="PIRSF039088">
    <property type="entry name" value="F_ATPase_subunit_alpha"/>
    <property type="match status" value="1"/>
</dbReference>
<dbReference type="SUPFAM" id="SSF47917">
    <property type="entry name" value="C-terminal domain of alpha and beta subunits of F1 ATP synthase"/>
    <property type="match status" value="1"/>
</dbReference>
<dbReference type="SUPFAM" id="SSF50615">
    <property type="entry name" value="N-terminal domain of alpha and beta subunits of F1 ATP synthase"/>
    <property type="match status" value="1"/>
</dbReference>
<dbReference type="SUPFAM" id="SSF52540">
    <property type="entry name" value="P-loop containing nucleoside triphosphate hydrolases"/>
    <property type="match status" value="1"/>
</dbReference>
<dbReference type="PROSITE" id="PS00152">
    <property type="entry name" value="ATPASE_ALPHA_BETA"/>
    <property type="match status" value="1"/>
</dbReference>
<reference key="1">
    <citation type="submission" date="2007-12" db="EMBL/GenBank/DDBJ databases">
        <title>Brucella suis ATCC 23445 whole genome shotgun sequencing project.</title>
        <authorList>
            <person name="Setubal J.C."/>
            <person name="Bowns C."/>
            <person name="Boyle S."/>
            <person name="Crasta O.R."/>
            <person name="Czar M.J."/>
            <person name="Dharmanolla C."/>
            <person name="Gillespie J.J."/>
            <person name="Kenyon R.W."/>
            <person name="Lu J."/>
            <person name="Mane S."/>
            <person name="Mohapatra S."/>
            <person name="Nagrani S."/>
            <person name="Purkayastha A."/>
            <person name="Rajasimha H.K."/>
            <person name="Shallom J.M."/>
            <person name="Shallom S."/>
            <person name="Shukla M."/>
            <person name="Snyder E.E."/>
            <person name="Sobral B.W."/>
            <person name="Wattam A.R."/>
            <person name="Will R."/>
            <person name="Williams K."/>
            <person name="Yoo H."/>
            <person name="Bruce D."/>
            <person name="Detter C."/>
            <person name="Munk C."/>
            <person name="Brettin T.S."/>
        </authorList>
    </citation>
    <scope>NUCLEOTIDE SEQUENCE [LARGE SCALE GENOMIC DNA]</scope>
    <source>
        <strain>ATCC 23445 / NCTC 10510</strain>
    </source>
</reference>
<gene>
    <name evidence="1" type="primary">atpA</name>
    <name type="ordered locus">BSUIS_B1277</name>
</gene>
<protein>
    <recommendedName>
        <fullName evidence="1">ATP synthase subunit alpha</fullName>
        <ecNumber evidence="1">7.1.2.2</ecNumber>
    </recommendedName>
    <alternativeName>
        <fullName evidence="1">ATP synthase F1 sector subunit alpha</fullName>
    </alternativeName>
    <alternativeName>
        <fullName evidence="1">F-ATPase subunit alpha</fullName>
    </alternativeName>
</protein>
<name>ATPA_BRUSI</name>
<evidence type="ECO:0000255" key="1">
    <source>
        <dbReference type="HAMAP-Rule" id="MF_01346"/>
    </source>
</evidence>
<proteinExistence type="inferred from homology"/>
<sequence>MDIRAAEISAILKEQIKNFGKEAEVSEVGQVLSVGDGIARVYGLDNVQAGEMVEFPGGIRGMALNLESDNVGVVIFGADRDIKEGDVVKRTGAIVDVPVGPELLGRVVDALGNPIDGKGPIKAKERRRVDVKAPGIIPRKSVHEPMSTGLKAIDALIPVGRGQRELVIGDRQTGKTAIILDTFLNQKPIHDNGPDKDKLYCVYVAVGQKRSTVAQFVKVLEERGALEYSIVVAATASDPAPMQYLAPFAGCAMGEYFRDNGQHALIGYDDLSKQAVAYRQMSLLLRRPPGREAYPGDVFYLHSRLLERAAKLNDENGAGSLTALPVIETQGNDVSAFIPTNVISITDGQIFLETNLFYQGIRPAVNVGLSVSRVGSSAQIKAMKQVAGSIKGELAQYREMAAFAQFGSDLDAATQRLLNRGARLTELLKQPQFSPLKTEEQVAVIYAGVNGYLDKLAVNQVGKFEEGLLASLRTEHKDVLEGIRNEKALTDDLKAKLKAAIDAFAKSFA</sequence>
<organism>
    <name type="scientific">Brucella suis (strain ATCC 23445 / NCTC 10510)</name>
    <dbReference type="NCBI Taxonomy" id="470137"/>
    <lineage>
        <taxon>Bacteria</taxon>
        <taxon>Pseudomonadati</taxon>
        <taxon>Pseudomonadota</taxon>
        <taxon>Alphaproteobacteria</taxon>
        <taxon>Hyphomicrobiales</taxon>
        <taxon>Brucellaceae</taxon>
        <taxon>Brucella/Ochrobactrum group</taxon>
        <taxon>Brucella</taxon>
    </lineage>
</organism>
<keyword id="KW-0066">ATP synthesis</keyword>
<keyword id="KW-0067">ATP-binding</keyword>
<keyword id="KW-0997">Cell inner membrane</keyword>
<keyword id="KW-1003">Cell membrane</keyword>
<keyword id="KW-0139">CF(1)</keyword>
<keyword id="KW-0375">Hydrogen ion transport</keyword>
<keyword id="KW-0406">Ion transport</keyword>
<keyword id="KW-0472">Membrane</keyword>
<keyword id="KW-0547">Nucleotide-binding</keyword>
<keyword id="KW-1278">Translocase</keyword>
<keyword id="KW-0813">Transport</keyword>
<feature type="chain" id="PRO_1000086868" description="ATP synthase subunit alpha">
    <location>
        <begin position="1"/>
        <end position="509"/>
    </location>
</feature>
<feature type="binding site" evidence="1">
    <location>
        <begin position="169"/>
        <end position="176"/>
    </location>
    <ligand>
        <name>ATP</name>
        <dbReference type="ChEBI" id="CHEBI:30616"/>
    </ligand>
</feature>
<feature type="site" description="Required for activity" evidence="1">
    <location>
        <position position="370"/>
    </location>
</feature>
<comment type="function">
    <text evidence="1">Produces ATP from ADP in the presence of a proton gradient across the membrane. The alpha chain is a regulatory subunit.</text>
</comment>
<comment type="catalytic activity">
    <reaction evidence="1">
        <text>ATP + H2O + 4 H(+)(in) = ADP + phosphate + 5 H(+)(out)</text>
        <dbReference type="Rhea" id="RHEA:57720"/>
        <dbReference type="ChEBI" id="CHEBI:15377"/>
        <dbReference type="ChEBI" id="CHEBI:15378"/>
        <dbReference type="ChEBI" id="CHEBI:30616"/>
        <dbReference type="ChEBI" id="CHEBI:43474"/>
        <dbReference type="ChEBI" id="CHEBI:456216"/>
        <dbReference type="EC" id="7.1.2.2"/>
    </reaction>
</comment>
<comment type="subunit">
    <text evidence="1">F-type ATPases have 2 components, CF(1) - the catalytic core - and CF(0) - the membrane proton channel. CF(1) has five subunits: alpha(3), beta(3), gamma(1), delta(1), epsilon(1). CF(0) has three main subunits: a(1), b(2) and c(9-12). The alpha and beta chains form an alternating ring which encloses part of the gamma chain. CF(1) is attached to CF(0) by a central stalk formed by the gamma and epsilon chains, while a peripheral stalk is formed by the delta and b chains.</text>
</comment>
<comment type="subcellular location">
    <subcellularLocation>
        <location evidence="1">Cell inner membrane</location>
        <topology evidence="1">Peripheral membrane protein</topology>
    </subcellularLocation>
</comment>
<comment type="similarity">
    <text evidence="1">Belongs to the ATPase alpha/beta chains family.</text>
</comment>
<accession>A9WWS4</accession>